<protein>
    <recommendedName>
        <fullName evidence="1">Acetyl-coenzyme A carboxylase carboxyl transferase subunit beta</fullName>
        <shortName evidence="1">ACCase subunit beta</shortName>
        <shortName evidence="1">Acetyl-CoA carboxylase carboxyltransferase subunit beta</shortName>
        <ecNumber evidence="1">2.1.3.15</ecNumber>
    </recommendedName>
</protein>
<accession>A7ZPD1</accession>
<evidence type="ECO:0000255" key="1">
    <source>
        <dbReference type="HAMAP-Rule" id="MF_01395"/>
    </source>
</evidence>
<evidence type="ECO:0000255" key="2">
    <source>
        <dbReference type="PROSITE-ProRule" id="PRU01136"/>
    </source>
</evidence>
<evidence type="ECO:0000256" key="3">
    <source>
        <dbReference type="SAM" id="MobiDB-lite"/>
    </source>
</evidence>
<reference key="1">
    <citation type="journal article" date="2008" name="J. Bacteriol.">
        <title>The pangenome structure of Escherichia coli: comparative genomic analysis of E. coli commensal and pathogenic isolates.</title>
        <authorList>
            <person name="Rasko D.A."/>
            <person name="Rosovitz M.J."/>
            <person name="Myers G.S.A."/>
            <person name="Mongodin E.F."/>
            <person name="Fricke W.F."/>
            <person name="Gajer P."/>
            <person name="Crabtree J."/>
            <person name="Sebaihia M."/>
            <person name="Thomson N.R."/>
            <person name="Chaudhuri R."/>
            <person name="Henderson I.R."/>
            <person name="Sperandio V."/>
            <person name="Ravel J."/>
        </authorList>
    </citation>
    <scope>NUCLEOTIDE SEQUENCE [LARGE SCALE GENOMIC DNA]</scope>
    <source>
        <strain>E24377A / ETEC</strain>
    </source>
</reference>
<comment type="function">
    <text evidence="1">Component of the acetyl coenzyme A carboxylase (ACC) complex. Biotin carboxylase (BC) catalyzes the carboxylation of biotin on its carrier protein (BCCP) and then the CO(2) group is transferred by the transcarboxylase to acetyl-CoA to form malonyl-CoA.</text>
</comment>
<comment type="catalytic activity">
    <reaction evidence="1">
        <text>N(6)-carboxybiotinyl-L-lysyl-[protein] + acetyl-CoA = N(6)-biotinyl-L-lysyl-[protein] + malonyl-CoA</text>
        <dbReference type="Rhea" id="RHEA:54728"/>
        <dbReference type="Rhea" id="RHEA-COMP:10505"/>
        <dbReference type="Rhea" id="RHEA-COMP:10506"/>
        <dbReference type="ChEBI" id="CHEBI:57288"/>
        <dbReference type="ChEBI" id="CHEBI:57384"/>
        <dbReference type="ChEBI" id="CHEBI:83144"/>
        <dbReference type="ChEBI" id="CHEBI:83145"/>
        <dbReference type="EC" id="2.1.3.15"/>
    </reaction>
</comment>
<comment type="cofactor">
    <cofactor evidence="1">
        <name>Zn(2+)</name>
        <dbReference type="ChEBI" id="CHEBI:29105"/>
    </cofactor>
    <text evidence="1">Binds 1 zinc ion per subunit.</text>
</comment>
<comment type="pathway">
    <text evidence="1">Lipid metabolism; malonyl-CoA biosynthesis; malonyl-CoA from acetyl-CoA: step 1/1.</text>
</comment>
<comment type="subunit">
    <text evidence="1">Acetyl-CoA carboxylase is a heterohexamer composed of biotin carboxyl carrier protein (AccB), biotin carboxylase (AccC) and two subunits each of ACCase subunit alpha (AccA) and ACCase subunit beta (AccD).</text>
</comment>
<comment type="subcellular location">
    <subcellularLocation>
        <location evidence="1">Cytoplasm</location>
    </subcellularLocation>
</comment>
<comment type="similarity">
    <text evidence="1">Belongs to the AccD/PCCB family.</text>
</comment>
<name>ACCD_ECO24</name>
<proteinExistence type="inferred from homology"/>
<gene>
    <name evidence="1" type="primary">accD</name>
    <name type="ordered locus">EcE24377A_2610</name>
</gene>
<keyword id="KW-0067">ATP-binding</keyword>
<keyword id="KW-0963">Cytoplasm</keyword>
<keyword id="KW-0275">Fatty acid biosynthesis</keyword>
<keyword id="KW-0276">Fatty acid metabolism</keyword>
<keyword id="KW-0444">Lipid biosynthesis</keyword>
<keyword id="KW-0443">Lipid metabolism</keyword>
<keyword id="KW-0479">Metal-binding</keyword>
<keyword id="KW-0547">Nucleotide-binding</keyword>
<keyword id="KW-1185">Reference proteome</keyword>
<keyword id="KW-0808">Transferase</keyword>
<keyword id="KW-0862">Zinc</keyword>
<keyword id="KW-0863">Zinc-finger</keyword>
<feature type="chain" id="PRO_0000358989" description="Acetyl-coenzyme A carboxylase carboxyl transferase subunit beta">
    <location>
        <begin position="1"/>
        <end position="304"/>
    </location>
</feature>
<feature type="domain" description="CoA carboxyltransferase N-terminal" evidence="2">
    <location>
        <begin position="23"/>
        <end position="292"/>
    </location>
</feature>
<feature type="zinc finger region" description="C4-type" evidence="1">
    <location>
        <begin position="27"/>
        <end position="49"/>
    </location>
</feature>
<feature type="region of interest" description="Disordered" evidence="3">
    <location>
        <begin position="284"/>
        <end position="304"/>
    </location>
</feature>
<feature type="compositionally biased region" description="Pro residues" evidence="3">
    <location>
        <begin position="295"/>
        <end position="304"/>
    </location>
</feature>
<feature type="binding site" evidence="1">
    <location>
        <position position="27"/>
    </location>
    <ligand>
        <name>Zn(2+)</name>
        <dbReference type="ChEBI" id="CHEBI:29105"/>
    </ligand>
</feature>
<feature type="binding site" evidence="1">
    <location>
        <position position="30"/>
    </location>
    <ligand>
        <name>Zn(2+)</name>
        <dbReference type="ChEBI" id="CHEBI:29105"/>
    </ligand>
</feature>
<feature type="binding site" evidence="1">
    <location>
        <position position="46"/>
    </location>
    <ligand>
        <name>Zn(2+)</name>
        <dbReference type="ChEBI" id="CHEBI:29105"/>
    </ligand>
</feature>
<feature type="binding site" evidence="1">
    <location>
        <position position="49"/>
    </location>
    <ligand>
        <name>Zn(2+)</name>
        <dbReference type="ChEBI" id="CHEBI:29105"/>
    </ligand>
</feature>
<organism>
    <name type="scientific">Escherichia coli O139:H28 (strain E24377A / ETEC)</name>
    <dbReference type="NCBI Taxonomy" id="331111"/>
    <lineage>
        <taxon>Bacteria</taxon>
        <taxon>Pseudomonadati</taxon>
        <taxon>Pseudomonadota</taxon>
        <taxon>Gammaproteobacteria</taxon>
        <taxon>Enterobacterales</taxon>
        <taxon>Enterobacteriaceae</taxon>
        <taxon>Escherichia</taxon>
    </lineage>
</organism>
<sequence>MSWIERIKSNITPTRKASIPEGVWTKCDSCGQVLYRAELERNLEVCPKCDHHMRMTARNRLHSLLDEGSLVELGSELEPKDVLKFRDSKKYKDRLASAQKETGEKDALVVMKGTLYGMPVVAAAFEFAFMGGSMGSVVGARFVRAVEQALEDNCPLICFSASGGARMQEALMSLMQMAKTSAALAKMQERGLPYISVLTDPTMGGVSASFAMLGDLNIAEPKALIGFAGPRVIEQTVREKLPPGFQRSEFLIEKGAIDMIVRRPEMRLKLASILAKLMNLPAPNPEAPREGVVVPPVPDQEPEA</sequence>
<dbReference type="EC" id="2.1.3.15" evidence="1"/>
<dbReference type="EMBL" id="CP000800">
    <property type="protein sequence ID" value="ABV20082.1"/>
    <property type="molecule type" value="Genomic_DNA"/>
</dbReference>
<dbReference type="RefSeq" id="WP_000118404.1">
    <property type="nucleotide sequence ID" value="NC_009801.1"/>
</dbReference>
<dbReference type="SMR" id="A7ZPD1"/>
<dbReference type="GeneID" id="75202601"/>
<dbReference type="KEGG" id="ecw:EcE24377A_2610"/>
<dbReference type="HOGENOM" id="CLU_015486_1_0_6"/>
<dbReference type="UniPathway" id="UPA00655">
    <property type="reaction ID" value="UER00711"/>
</dbReference>
<dbReference type="Proteomes" id="UP000001122">
    <property type="component" value="Chromosome"/>
</dbReference>
<dbReference type="GO" id="GO:0009329">
    <property type="term" value="C:acetate CoA-transferase complex"/>
    <property type="evidence" value="ECO:0007669"/>
    <property type="project" value="TreeGrafter"/>
</dbReference>
<dbReference type="GO" id="GO:0003989">
    <property type="term" value="F:acetyl-CoA carboxylase activity"/>
    <property type="evidence" value="ECO:0007669"/>
    <property type="project" value="InterPro"/>
</dbReference>
<dbReference type="GO" id="GO:0005524">
    <property type="term" value="F:ATP binding"/>
    <property type="evidence" value="ECO:0007669"/>
    <property type="project" value="UniProtKB-KW"/>
</dbReference>
<dbReference type="GO" id="GO:0016743">
    <property type="term" value="F:carboxyl- or carbamoyltransferase activity"/>
    <property type="evidence" value="ECO:0007669"/>
    <property type="project" value="UniProtKB-UniRule"/>
</dbReference>
<dbReference type="GO" id="GO:0008270">
    <property type="term" value="F:zinc ion binding"/>
    <property type="evidence" value="ECO:0007669"/>
    <property type="project" value="UniProtKB-UniRule"/>
</dbReference>
<dbReference type="GO" id="GO:0006633">
    <property type="term" value="P:fatty acid biosynthetic process"/>
    <property type="evidence" value="ECO:0007669"/>
    <property type="project" value="UniProtKB-KW"/>
</dbReference>
<dbReference type="GO" id="GO:2001295">
    <property type="term" value="P:malonyl-CoA biosynthetic process"/>
    <property type="evidence" value="ECO:0007669"/>
    <property type="project" value="UniProtKB-UniRule"/>
</dbReference>
<dbReference type="FunFam" id="3.90.226.10:FF:000013">
    <property type="entry name" value="Acetyl-coenzyme A carboxylase carboxyl transferase subunit beta"/>
    <property type="match status" value="1"/>
</dbReference>
<dbReference type="Gene3D" id="3.90.226.10">
    <property type="entry name" value="2-enoyl-CoA Hydratase, Chain A, domain 1"/>
    <property type="match status" value="1"/>
</dbReference>
<dbReference type="HAMAP" id="MF_01395">
    <property type="entry name" value="AcetylCoA_CT_beta"/>
    <property type="match status" value="1"/>
</dbReference>
<dbReference type="InterPro" id="IPR034733">
    <property type="entry name" value="AcCoA_carboxyl_beta"/>
</dbReference>
<dbReference type="InterPro" id="IPR000438">
    <property type="entry name" value="Acetyl_CoA_COase_Trfase_b_su"/>
</dbReference>
<dbReference type="InterPro" id="IPR029045">
    <property type="entry name" value="ClpP/crotonase-like_dom_sf"/>
</dbReference>
<dbReference type="InterPro" id="IPR011762">
    <property type="entry name" value="COA_CT_N"/>
</dbReference>
<dbReference type="InterPro" id="IPR041010">
    <property type="entry name" value="Znf-ACC"/>
</dbReference>
<dbReference type="NCBIfam" id="TIGR00515">
    <property type="entry name" value="accD"/>
    <property type="match status" value="1"/>
</dbReference>
<dbReference type="PANTHER" id="PTHR42995">
    <property type="entry name" value="ACETYL-COENZYME A CARBOXYLASE CARBOXYL TRANSFERASE SUBUNIT BETA, CHLOROPLASTIC"/>
    <property type="match status" value="1"/>
</dbReference>
<dbReference type="PANTHER" id="PTHR42995:SF5">
    <property type="entry name" value="ACETYL-COENZYME A CARBOXYLASE CARBOXYL TRANSFERASE SUBUNIT BETA, CHLOROPLASTIC"/>
    <property type="match status" value="1"/>
</dbReference>
<dbReference type="Pfam" id="PF01039">
    <property type="entry name" value="Carboxyl_trans"/>
    <property type="match status" value="1"/>
</dbReference>
<dbReference type="Pfam" id="PF17848">
    <property type="entry name" value="Zn_ribbon_ACC"/>
    <property type="match status" value="1"/>
</dbReference>
<dbReference type="PRINTS" id="PR01070">
    <property type="entry name" value="ACCCTRFRASEB"/>
</dbReference>
<dbReference type="SUPFAM" id="SSF52096">
    <property type="entry name" value="ClpP/crotonase"/>
    <property type="match status" value="1"/>
</dbReference>
<dbReference type="PROSITE" id="PS50980">
    <property type="entry name" value="COA_CT_NTER"/>
    <property type="match status" value="1"/>
</dbReference>